<feature type="chain" id="PRO_0000146041" description="Phosphoglycerate kinase">
    <location>
        <begin position="1"/>
        <end position="391"/>
    </location>
</feature>
<feature type="binding site" evidence="1">
    <location>
        <begin position="21"/>
        <end position="23"/>
    </location>
    <ligand>
        <name>substrate</name>
    </ligand>
</feature>
<feature type="binding site" evidence="1">
    <location>
        <position position="36"/>
    </location>
    <ligand>
        <name>substrate</name>
    </ligand>
</feature>
<feature type="binding site" evidence="1">
    <location>
        <begin position="59"/>
        <end position="62"/>
    </location>
    <ligand>
        <name>substrate</name>
    </ligand>
</feature>
<feature type="binding site" evidence="1">
    <location>
        <position position="113"/>
    </location>
    <ligand>
        <name>substrate</name>
    </ligand>
</feature>
<feature type="binding site" evidence="1">
    <location>
        <position position="146"/>
    </location>
    <ligand>
        <name>substrate</name>
    </ligand>
</feature>
<feature type="binding site" evidence="1">
    <location>
        <position position="197"/>
    </location>
    <ligand>
        <name>ATP</name>
        <dbReference type="ChEBI" id="CHEBI:30616"/>
    </ligand>
</feature>
<feature type="binding site" evidence="1">
    <location>
        <position position="319"/>
    </location>
    <ligand>
        <name>ATP</name>
        <dbReference type="ChEBI" id="CHEBI:30616"/>
    </ligand>
</feature>
<feature type="binding site" evidence="1">
    <location>
        <begin position="345"/>
        <end position="348"/>
    </location>
    <ligand>
        <name>ATP</name>
        <dbReference type="ChEBI" id="CHEBI:30616"/>
    </ligand>
</feature>
<sequence length="391" mass="40902">MSIVRMTDLALSGKRVLIRQDLNVPIDQGRITSEQRIIASLPTIRVALERGAAVMVTSHLGRPKEGVWSEEDSLAPVAKRLSQLLGIEVPLRRDWVDGVQVAPGQLVLLENCRMNVGEAENDEALARKYAALCDVFVMDAFGTAHRAQASTHGVICCAAIAAGGPLLMAELDALSRGLEHPVKPLLAIVGGSKVSTKLELLSNLVNNVEQLITGGGIANTFLAAAGYSIGKSLYEGDLIETAREIITAAKARGAEIPLPTDVVVAKQFLPGVTATVKTVDAIVADDLILDIGPQTARHYAALIETAATVVWNGPVGVFEFDAFSKGTEVLARAVAASSAFSIAGGGDTLAAIDKYGVADQISYISTGGGAFLEFLEGKTLPAVAALQARSG</sequence>
<organism>
    <name type="scientific">Xylella fastidiosa (strain 9a5c)</name>
    <dbReference type="NCBI Taxonomy" id="160492"/>
    <lineage>
        <taxon>Bacteria</taxon>
        <taxon>Pseudomonadati</taxon>
        <taxon>Pseudomonadota</taxon>
        <taxon>Gammaproteobacteria</taxon>
        <taxon>Lysobacterales</taxon>
        <taxon>Lysobacteraceae</taxon>
        <taxon>Xylella</taxon>
    </lineage>
</organism>
<gene>
    <name evidence="1" type="primary">pgk</name>
    <name type="ordered locus">XF_0823</name>
</gene>
<comment type="catalytic activity">
    <reaction evidence="1">
        <text>(2R)-3-phosphoglycerate + ATP = (2R)-3-phospho-glyceroyl phosphate + ADP</text>
        <dbReference type="Rhea" id="RHEA:14801"/>
        <dbReference type="ChEBI" id="CHEBI:30616"/>
        <dbReference type="ChEBI" id="CHEBI:57604"/>
        <dbReference type="ChEBI" id="CHEBI:58272"/>
        <dbReference type="ChEBI" id="CHEBI:456216"/>
        <dbReference type="EC" id="2.7.2.3"/>
    </reaction>
</comment>
<comment type="pathway">
    <text evidence="1">Carbohydrate degradation; glycolysis; pyruvate from D-glyceraldehyde 3-phosphate: step 2/5.</text>
</comment>
<comment type="subunit">
    <text evidence="1">Monomer.</text>
</comment>
<comment type="subcellular location">
    <subcellularLocation>
        <location evidence="1">Cytoplasm</location>
    </subcellularLocation>
</comment>
<comment type="similarity">
    <text evidence="1">Belongs to the phosphoglycerate kinase family.</text>
</comment>
<comment type="sequence caution" evidence="2">
    <conflict type="erroneous initiation">
        <sequence resource="EMBL-CDS" id="AAF83633"/>
    </conflict>
</comment>
<proteinExistence type="inferred from homology"/>
<keyword id="KW-0067">ATP-binding</keyword>
<keyword id="KW-0963">Cytoplasm</keyword>
<keyword id="KW-0324">Glycolysis</keyword>
<keyword id="KW-0418">Kinase</keyword>
<keyword id="KW-0547">Nucleotide-binding</keyword>
<keyword id="KW-0808">Transferase</keyword>
<dbReference type="EC" id="2.7.2.3" evidence="1"/>
<dbReference type="EMBL" id="AE003849">
    <property type="protein sequence ID" value="AAF83633.1"/>
    <property type="status" value="ALT_INIT"/>
    <property type="molecule type" value="Genomic_DNA"/>
</dbReference>
<dbReference type="PIR" id="D82757">
    <property type="entry name" value="D82757"/>
</dbReference>
<dbReference type="RefSeq" id="WP_010893343.1">
    <property type="nucleotide sequence ID" value="NC_002488.3"/>
</dbReference>
<dbReference type="SMR" id="Q9PF55"/>
<dbReference type="STRING" id="160492.XF_0823"/>
<dbReference type="KEGG" id="xfa:XF_0823"/>
<dbReference type="eggNOG" id="COG0126">
    <property type="taxonomic scope" value="Bacteria"/>
</dbReference>
<dbReference type="HOGENOM" id="CLU_025427_0_2_6"/>
<dbReference type="UniPathway" id="UPA00109">
    <property type="reaction ID" value="UER00185"/>
</dbReference>
<dbReference type="Proteomes" id="UP000000812">
    <property type="component" value="Chromosome"/>
</dbReference>
<dbReference type="GO" id="GO:0005829">
    <property type="term" value="C:cytosol"/>
    <property type="evidence" value="ECO:0007669"/>
    <property type="project" value="TreeGrafter"/>
</dbReference>
<dbReference type="GO" id="GO:0043531">
    <property type="term" value="F:ADP binding"/>
    <property type="evidence" value="ECO:0007669"/>
    <property type="project" value="TreeGrafter"/>
</dbReference>
<dbReference type="GO" id="GO:0005524">
    <property type="term" value="F:ATP binding"/>
    <property type="evidence" value="ECO:0007669"/>
    <property type="project" value="UniProtKB-KW"/>
</dbReference>
<dbReference type="GO" id="GO:0004618">
    <property type="term" value="F:phosphoglycerate kinase activity"/>
    <property type="evidence" value="ECO:0007669"/>
    <property type="project" value="UniProtKB-UniRule"/>
</dbReference>
<dbReference type="GO" id="GO:0006094">
    <property type="term" value="P:gluconeogenesis"/>
    <property type="evidence" value="ECO:0007669"/>
    <property type="project" value="TreeGrafter"/>
</dbReference>
<dbReference type="GO" id="GO:0006096">
    <property type="term" value="P:glycolytic process"/>
    <property type="evidence" value="ECO:0007669"/>
    <property type="project" value="UniProtKB-UniRule"/>
</dbReference>
<dbReference type="FunFam" id="3.40.50.1260:FF:000001">
    <property type="entry name" value="Phosphoglycerate kinase"/>
    <property type="match status" value="1"/>
</dbReference>
<dbReference type="FunFam" id="3.40.50.1260:FF:000002">
    <property type="entry name" value="Phosphoglycerate kinase"/>
    <property type="match status" value="1"/>
</dbReference>
<dbReference type="Gene3D" id="3.40.50.1260">
    <property type="entry name" value="Phosphoglycerate kinase, N-terminal domain"/>
    <property type="match status" value="2"/>
</dbReference>
<dbReference type="HAMAP" id="MF_00145">
    <property type="entry name" value="Phosphoglyc_kinase"/>
    <property type="match status" value="1"/>
</dbReference>
<dbReference type="InterPro" id="IPR001576">
    <property type="entry name" value="Phosphoglycerate_kinase"/>
</dbReference>
<dbReference type="InterPro" id="IPR015911">
    <property type="entry name" value="Phosphoglycerate_kinase_CS"/>
</dbReference>
<dbReference type="InterPro" id="IPR015824">
    <property type="entry name" value="Phosphoglycerate_kinase_N"/>
</dbReference>
<dbReference type="InterPro" id="IPR036043">
    <property type="entry name" value="Phosphoglycerate_kinase_sf"/>
</dbReference>
<dbReference type="PANTHER" id="PTHR11406">
    <property type="entry name" value="PHOSPHOGLYCERATE KINASE"/>
    <property type="match status" value="1"/>
</dbReference>
<dbReference type="PANTHER" id="PTHR11406:SF23">
    <property type="entry name" value="PHOSPHOGLYCERATE KINASE 1, CHLOROPLASTIC-RELATED"/>
    <property type="match status" value="1"/>
</dbReference>
<dbReference type="Pfam" id="PF00162">
    <property type="entry name" value="PGK"/>
    <property type="match status" value="1"/>
</dbReference>
<dbReference type="PIRSF" id="PIRSF000724">
    <property type="entry name" value="Pgk"/>
    <property type="match status" value="1"/>
</dbReference>
<dbReference type="PRINTS" id="PR00477">
    <property type="entry name" value="PHGLYCKINASE"/>
</dbReference>
<dbReference type="SUPFAM" id="SSF53748">
    <property type="entry name" value="Phosphoglycerate kinase"/>
    <property type="match status" value="1"/>
</dbReference>
<dbReference type="PROSITE" id="PS00111">
    <property type="entry name" value="PGLYCERATE_KINASE"/>
    <property type="match status" value="1"/>
</dbReference>
<accession>Q9PF55</accession>
<evidence type="ECO:0000255" key="1">
    <source>
        <dbReference type="HAMAP-Rule" id="MF_00145"/>
    </source>
</evidence>
<evidence type="ECO:0000305" key="2"/>
<reference key="1">
    <citation type="journal article" date="2000" name="Nature">
        <title>The genome sequence of the plant pathogen Xylella fastidiosa.</title>
        <authorList>
            <person name="Simpson A.J.G."/>
            <person name="Reinach F.C."/>
            <person name="Arruda P."/>
            <person name="Abreu F.A."/>
            <person name="Acencio M."/>
            <person name="Alvarenga R."/>
            <person name="Alves L.M.C."/>
            <person name="Araya J.E."/>
            <person name="Baia G.S."/>
            <person name="Baptista C.S."/>
            <person name="Barros M.H."/>
            <person name="Bonaccorsi E.D."/>
            <person name="Bordin S."/>
            <person name="Bove J.M."/>
            <person name="Briones M.R.S."/>
            <person name="Bueno M.R.P."/>
            <person name="Camargo A.A."/>
            <person name="Camargo L.E.A."/>
            <person name="Carraro D.M."/>
            <person name="Carrer H."/>
            <person name="Colauto N.B."/>
            <person name="Colombo C."/>
            <person name="Costa F.F."/>
            <person name="Costa M.C.R."/>
            <person name="Costa-Neto C.M."/>
            <person name="Coutinho L.L."/>
            <person name="Cristofani M."/>
            <person name="Dias-Neto E."/>
            <person name="Docena C."/>
            <person name="El-Dorry H."/>
            <person name="Facincani A.P."/>
            <person name="Ferreira A.J.S."/>
            <person name="Ferreira V.C.A."/>
            <person name="Ferro J.A."/>
            <person name="Fraga J.S."/>
            <person name="Franca S.C."/>
            <person name="Franco M.C."/>
            <person name="Frohme M."/>
            <person name="Furlan L.R."/>
            <person name="Garnier M."/>
            <person name="Goldman G.H."/>
            <person name="Goldman M.H.S."/>
            <person name="Gomes S.L."/>
            <person name="Gruber A."/>
            <person name="Ho P.L."/>
            <person name="Hoheisel J.D."/>
            <person name="Junqueira M.L."/>
            <person name="Kemper E.L."/>
            <person name="Kitajima J.P."/>
            <person name="Krieger J.E."/>
            <person name="Kuramae E.E."/>
            <person name="Laigret F."/>
            <person name="Lambais M.R."/>
            <person name="Leite L.C.C."/>
            <person name="Lemos E.G.M."/>
            <person name="Lemos M.V.F."/>
            <person name="Lopes S.A."/>
            <person name="Lopes C.R."/>
            <person name="Machado J.A."/>
            <person name="Machado M.A."/>
            <person name="Madeira A.M.B.N."/>
            <person name="Madeira H.M.F."/>
            <person name="Marino C.L."/>
            <person name="Marques M.V."/>
            <person name="Martins E.A.L."/>
            <person name="Martins E.M.F."/>
            <person name="Matsukuma A.Y."/>
            <person name="Menck C.F.M."/>
            <person name="Miracca E.C."/>
            <person name="Miyaki C.Y."/>
            <person name="Monteiro-Vitorello C.B."/>
            <person name="Moon D.H."/>
            <person name="Nagai M.A."/>
            <person name="Nascimento A.L.T.O."/>
            <person name="Netto L.E.S."/>
            <person name="Nhani A. Jr."/>
            <person name="Nobrega F.G."/>
            <person name="Nunes L.R."/>
            <person name="Oliveira M.A."/>
            <person name="de Oliveira M.C."/>
            <person name="de Oliveira R.C."/>
            <person name="Palmieri D.A."/>
            <person name="Paris A."/>
            <person name="Peixoto B.R."/>
            <person name="Pereira G.A.G."/>
            <person name="Pereira H.A. Jr."/>
            <person name="Pesquero J.B."/>
            <person name="Quaggio R.B."/>
            <person name="Roberto P.G."/>
            <person name="Rodrigues V."/>
            <person name="de Rosa A.J.M."/>
            <person name="de Rosa V.E. Jr."/>
            <person name="de Sa R.G."/>
            <person name="Santelli R.V."/>
            <person name="Sawasaki H.E."/>
            <person name="da Silva A.C.R."/>
            <person name="da Silva A.M."/>
            <person name="da Silva F.R."/>
            <person name="Silva W.A. Jr."/>
            <person name="da Silveira J.F."/>
            <person name="Silvestri M.L.Z."/>
            <person name="Siqueira W.J."/>
            <person name="de Souza A.A."/>
            <person name="de Souza A.P."/>
            <person name="Terenzi M.F."/>
            <person name="Truffi D."/>
            <person name="Tsai S.M."/>
            <person name="Tsuhako M.H."/>
            <person name="Vallada H."/>
            <person name="Van Sluys M.A."/>
            <person name="Verjovski-Almeida S."/>
            <person name="Vettore A.L."/>
            <person name="Zago M.A."/>
            <person name="Zatz M."/>
            <person name="Meidanis J."/>
            <person name="Setubal J.C."/>
        </authorList>
    </citation>
    <scope>NUCLEOTIDE SEQUENCE [LARGE SCALE GENOMIC DNA]</scope>
    <source>
        <strain>9a5c</strain>
    </source>
</reference>
<name>PGK_XYLFA</name>
<protein>
    <recommendedName>
        <fullName evidence="1">Phosphoglycerate kinase</fullName>
        <ecNumber evidence="1">2.7.2.3</ecNumber>
    </recommendedName>
</protein>